<reference key="1">
    <citation type="journal article" date="2001" name="FEBS Lett.">
        <title>Structural study of novel antimicrobial peptides, nigrocins, isolated from Rana nigromaculata.</title>
        <authorList>
            <person name="Park S."/>
            <person name="Park S.-H."/>
            <person name="Ahn H.-C."/>
            <person name="Kim S."/>
            <person name="Kim S.S."/>
            <person name="Lee B.J."/>
            <person name="Lee B.-J."/>
        </authorList>
    </citation>
    <scope>PROTEIN SEQUENCE</scope>
    <source>
        <tissue>Skin secretion</tissue>
    </source>
</reference>
<protein>
    <recommendedName>
        <fullName>Nigrocin-1</fullName>
    </recommendedName>
</protein>
<comment type="function">
    <text>Shows antibacterial activity against both Gram-positive and Gram-negative bacteria and against the fungus C.albicans. Has no hemolytic activity.</text>
</comment>
<comment type="subcellular location">
    <subcellularLocation>
        <location>Secreted</location>
    </subcellularLocation>
</comment>
<comment type="tissue specificity">
    <text>Expressed by the skin dorsal glands.</text>
</comment>
<comment type="similarity">
    <text evidence="2">Belongs to the frog skin active peptide (FSAP) family. Brevinin subfamily.</text>
</comment>
<organism>
    <name type="scientific">Pelophylax nigromaculatus</name>
    <name type="common">Black-spotted frog</name>
    <name type="synonym">Rana nigromaculata</name>
    <dbReference type="NCBI Taxonomy" id="8409"/>
    <lineage>
        <taxon>Eukaryota</taxon>
        <taxon>Metazoa</taxon>
        <taxon>Chordata</taxon>
        <taxon>Craniata</taxon>
        <taxon>Vertebrata</taxon>
        <taxon>Euteleostomi</taxon>
        <taxon>Amphibia</taxon>
        <taxon>Batrachia</taxon>
        <taxon>Anura</taxon>
        <taxon>Neobatrachia</taxon>
        <taxon>Ranoidea</taxon>
        <taxon>Ranidae</taxon>
        <taxon>Pelophylax</taxon>
    </lineage>
</organism>
<sequence length="33" mass="3348">GLLDSIKGMAISAGKGALQNLLKVASCKLDKTC</sequence>
<keyword id="KW-0878">Amphibian defense peptide</keyword>
<keyword id="KW-0044">Antibiotic</keyword>
<keyword id="KW-0929">Antimicrobial</keyword>
<keyword id="KW-0903">Direct protein sequencing</keyword>
<keyword id="KW-1015">Disulfide bond</keyword>
<keyword id="KW-0295">Fungicide</keyword>
<keyword id="KW-0964">Secreted</keyword>
<feature type="peptide" id="PRO_0000044738" description="Nigrocin-1">
    <location>
        <begin position="1"/>
        <end position="33"/>
    </location>
</feature>
<feature type="disulfide bond" evidence="1">
    <location>
        <begin position="27"/>
        <end position="33"/>
    </location>
</feature>
<accession>P0C008</accession>
<evidence type="ECO:0000250" key="1"/>
<evidence type="ECO:0000305" key="2"/>
<name>NIGR1_PELNI</name>
<proteinExistence type="evidence at protein level"/>
<dbReference type="SMR" id="P0C008"/>
<dbReference type="GO" id="GO:0005576">
    <property type="term" value="C:extracellular region"/>
    <property type="evidence" value="ECO:0007669"/>
    <property type="project" value="UniProtKB-SubCell"/>
</dbReference>
<dbReference type="GO" id="GO:0042742">
    <property type="term" value="P:defense response to bacterium"/>
    <property type="evidence" value="ECO:0007669"/>
    <property type="project" value="UniProtKB-KW"/>
</dbReference>
<dbReference type="GO" id="GO:0050832">
    <property type="term" value="P:defense response to fungus"/>
    <property type="evidence" value="ECO:0007669"/>
    <property type="project" value="UniProtKB-KW"/>
</dbReference>
<dbReference type="GO" id="GO:0031640">
    <property type="term" value="P:killing of cells of another organism"/>
    <property type="evidence" value="ECO:0007669"/>
    <property type="project" value="UniProtKB-KW"/>
</dbReference>
<dbReference type="InterPro" id="IPR012521">
    <property type="entry name" value="Antimicrobial_frog_2"/>
</dbReference>
<dbReference type="Pfam" id="PF08023">
    <property type="entry name" value="Antimicrobial_2"/>
    <property type="match status" value="1"/>
</dbReference>